<keyword id="KW-1003">Cell membrane</keyword>
<keyword id="KW-0472">Membrane</keyword>
<keyword id="KW-0812">Transmembrane</keyword>
<keyword id="KW-1133">Transmembrane helix</keyword>
<gene>
    <name type="ordered locus">Lm4b_00795</name>
</gene>
<comment type="subcellular location">
    <subcellularLocation>
        <location evidence="1">Cell membrane</location>
        <topology evidence="1">Multi-pass membrane protein</topology>
    </subcellularLocation>
</comment>
<comment type="similarity">
    <text evidence="1">Belongs to the UPF0266 family.</text>
</comment>
<name>Y795_LISMC</name>
<reference key="1">
    <citation type="journal article" date="2012" name="BMC Genomics">
        <title>Comparative genomics and transcriptomics of lineages I, II, and III strains of Listeria monocytogenes.</title>
        <authorList>
            <person name="Hain T."/>
            <person name="Ghai R."/>
            <person name="Billion A."/>
            <person name="Kuenne C.T."/>
            <person name="Steinweg C."/>
            <person name="Izar B."/>
            <person name="Mohamed W."/>
            <person name="Mraheil M."/>
            <person name="Domann E."/>
            <person name="Schaffrath S."/>
            <person name="Karst U."/>
            <person name="Goesmann A."/>
            <person name="Oehm S."/>
            <person name="Puhler A."/>
            <person name="Merkl R."/>
            <person name="Vorwerk S."/>
            <person name="Glaser P."/>
            <person name="Garrido P."/>
            <person name="Rusniok C."/>
            <person name="Buchrieser C."/>
            <person name="Goebel W."/>
            <person name="Chakraborty T."/>
        </authorList>
    </citation>
    <scope>NUCLEOTIDE SEQUENCE [LARGE SCALE GENOMIC DNA]</scope>
    <source>
        <strain>CLIP80459</strain>
    </source>
</reference>
<sequence length="155" mass="17889">MVWDATNIFLFAANILTVLYILYNDAVIPLWKGKTVLSVKLRSRGRWDGYIFVGIIVLLFVSNTFFREGPFSTSVLLGIMGVLFIYICFFRSSKAVFKESGLFYALLFFPYAKIERMNLSEDGVLVIETNRQRLMLFARSEKDLEKMLAVFTTYS</sequence>
<protein>
    <recommendedName>
        <fullName evidence="1">UPF0266 membrane protein Lm4b_00795</fullName>
    </recommendedName>
</protein>
<evidence type="ECO:0000255" key="1">
    <source>
        <dbReference type="HAMAP-Rule" id="MF_01071"/>
    </source>
</evidence>
<dbReference type="EMBL" id="FM242711">
    <property type="protein sequence ID" value="CAS04563.1"/>
    <property type="molecule type" value="Genomic_DNA"/>
</dbReference>
<dbReference type="RefSeq" id="WP_003721896.1">
    <property type="nucleotide sequence ID" value="NC_012488.1"/>
</dbReference>
<dbReference type="KEGG" id="lmc:Lm4b_00795"/>
<dbReference type="HOGENOM" id="CLU_133645_0_0_9"/>
<dbReference type="GO" id="GO:0005886">
    <property type="term" value="C:plasma membrane"/>
    <property type="evidence" value="ECO:0007669"/>
    <property type="project" value="UniProtKB-SubCell"/>
</dbReference>
<dbReference type="HAMAP" id="MF_01071">
    <property type="entry name" value="UPF0266"/>
    <property type="match status" value="1"/>
</dbReference>
<dbReference type="InterPro" id="IPR009328">
    <property type="entry name" value="DUF986"/>
</dbReference>
<dbReference type="NCBIfam" id="NF002791">
    <property type="entry name" value="PRK02913.1"/>
    <property type="match status" value="1"/>
</dbReference>
<dbReference type="Pfam" id="PF06173">
    <property type="entry name" value="DUF986"/>
    <property type="match status" value="1"/>
</dbReference>
<dbReference type="PIRSF" id="PIRSF020687">
    <property type="entry name" value="UCP020687"/>
    <property type="match status" value="1"/>
</dbReference>
<organism>
    <name type="scientific">Listeria monocytogenes serotype 4b (strain CLIP80459)</name>
    <dbReference type="NCBI Taxonomy" id="568819"/>
    <lineage>
        <taxon>Bacteria</taxon>
        <taxon>Bacillati</taxon>
        <taxon>Bacillota</taxon>
        <taxon>Bacilli</taxon>
        <taxon>Bacillales</taxon>
        <taxon>Listeriaceae</taxon>
        <taxon>Listeria</taxon>
    </lineage>
</organism>
<accession>C1L148</accession>
<feature type="chain" id="PRO_1000213475" description="UPF0266 membrane protein Lm4b_00795">
    <location>
        <begin position="1"/>
        <end position="155"/>
    </location>
</feature>
<feature type="transmembrane region" description="Helical" evidence="1">
    <location>
        <begin position="8"/>
        <end position="28"/>
    </location>
</feature>
<feature type="transmembrane region" description="Helical" evidence="1">
    <location>
        <begin position="46"/>
        <end position="66"/>
    </location>
</feature>
<feature type="transmembrane region" description="Helical" evidence="1">
    <location>
        <begin position="70"/>
        <end position="90"/>
    </location>
</feature>
<proteinExistence type="inferred from homology"/>